<accession>Q2JPX4</accession>
<reference key="1">
    <citation type="journal article" date="2007" name="ISME J.">
        <title>Population level functional diversity in a microbial community revealed by comparative genomic and metagenomic analyses.</title>
        <authorList>
            <person name="Bhaya D."/>
            <person name="Grossman A.R."/>
            <person name="Steunou A.-S."/>
            <person name="Khuri N."/>
            <person name="Cohan F.M."/>
            <person name="Hamamura N."/>
            <person name="Melendrez M.C."/>
            <person name="Bateson M.M."/>
            <person name="Ward D.M."/>
            <person name="Heidelberg J.F."/>
        </authorList>
    </citation>
    <scope>NUCLEOTIDE SEQUENCE [LARGE SCALE GENOMIC DNA]</scope>
    <source>
        <strain>JA-2-3B'a(2-13)</strain>
    </source>
</reference>
<proteinExistence type="inferred from homology"/>
<sequence length="252" mass="28043">MRVLQLPALRDNYIYLLHNPDTATAAVVDPAVAEPVLEKLAELGAELVAIFNTHHHHDHVGGNRQLLERYPRARVYGSQVDRGRIPGQTVELKAGETVEFAGRLAKVLFVPGHTRGHIAYYFSESGDLFCGDTLFAGGCGRLFEGTPEQMVGSLDQLRQLPEATRVWCAHEYTLNNLRFALTVDGDNPDLQARYQQVAALRQTGSPTVPSTIGEERRTNPFLRWDQPALQAATGLQDPVRVFARLRGMKDQF</sequence>
<comment type="function">
    <text evidence="1">Thiolesterase that catalyzes the hydrolysis of S-D-lactoyl-glutathione to form glutathione and D-lactic acid.</text>
</comment>
<comment type="catalytic activity">
    <reaction evidence="1">
        <text>an S-(2-hydroxyacyl)glutathione + H2O = a 2-hydroxy carboxylate + glutathione + H(+)</text>
        <dbReference type="Rhea" id="RHEA:21864"/>
        <dbReference type="ChEBI" id="CHEBI:15377"/>
        <dbReference type="ChEBI" id="CHEBI:15378"/>
        <dbReference type="ChEBI" id="CHEBI:57925"/>
        <dbReference type="ChEBI" id="CHEBI:58896"/>
        <dbReference type="ChEBI" id="CHEBI:71261"/>
        <dbReference type="EC" id="3.1.2.6"/>
    </reaction>
</comment>
<comment type="cofactor">
    <cofactor evidence="1">
        <name>Zn(2+)</name>
        <dbReference type="ChEBI" id="CHEBI:29105"/>
    </cofactor>
    <text evidence="1">Binds 2 Zn(2+) ions per subunit.</text>
</comment>
<comment type="pathway">
    <text evidence="1">Secondary metabolite metabolism; methylglyoxal degradation; (R)-lactate from methylglyoxal: step 2/2.</text>
</comment>
<comment type="subunit">
    <text evidence="1">Monomer.</text>
</comment>
<comment type="similarity">
    <text evidence="1">Belongs to the metallo-beta-lactamase superfamily. Glyoxalase II family.</text>
</comment>
<evidence type="ECO:0000255" key="1">
    <source>
        <dbReference type="HAMAP-Rule" id="MF_01374"/>
    </source>
</evidence>
<keyword id="KW-0378">Hydrolase</keyword>
<keyword id="KW-0479">Metal-binding</keyword>
<keyword id="KW-1185">Reference proteome</keyword>
<keyword id="KW-0862">Zinc</keyword>
<protein>
    <recommendedName>
        <fullName evidence="1">Hydroxyacylglutathione hydrolase</fullName>
        <ecNumber evidence="1">3.1.2.6</ecNumber>
    </recommendedName>
    <alternativeName>
        <fullName evidence="1">Glyoxalase II</fullName>
        <shortName evidence="1">Glx II</shortName>
    </alternativeName>
</protein>
<feature type="chain" id="PRO_1000068226" description="Hydroxyacylglutathione hydrolase">
    <location>
        <begin position="1"/>
        <end position="252"/>
    </location>
</feature>
<feature type="binding site" evidence="1">
    <location>
        <position position="54"/>
    </location>
    <ligand>
        <name>Zn(2+)</name>
        <dbReference type="ChEBI" id="CHEBI:29105"/>
        <label>1</label>
    </ligand>
</feature>
<feature type="binding site" evidence="1">
    <location>
        <position position="56"/>
    </location>
    <ligand>
        <name>Zn(2+)</name>
        <dbReference type="ChEBI" id="CHEBI:29105"/>
        <label>1</label>
    </ligand>
</feature>
<feature type="binding site" evidence="1">
    <location>
        <position position="58"/>
    </location>
    <ligand>
        <name>Zn(2+)</name>
        <dbReference type="ChEBI" id="CHEBI:29105"/>
        <label>2</label>
    </ligand>
</feature>
<feature type="binding site" evidence="1">
    <location>
        <position position="59"/>
    </location>
    <ligand>
        <name>Zn(2+)</name>
        <dbReference type="ChEBI" id="CHEBI:29105"/>
        <label>2</label>
    </ligand>
</feature>
<feature type="binding site" evidence="1">
    <location>
        <position position="113"/>
    </location>
    <ligand>
        <name>Zn(2+)</name>
        <dbReference type="ChEBI" id="CHEBI:29105"/>
        <label>1</label>
    </ligand>
</feature>
<feature type="binding site" evidence="1">
    <location>
        <position position="132"/>
    </location>
    <ligand>
        <name>Zn(2+)</name>
        <dbReference type="ChEBI" id="CHEBI:29105"/>
        <label>1</label>
    </ligand>
</feature>
<feature type="binding site" evidence="1">
    <location>
        <position position="132"/>
    </location>
    <ligand>
        <name>Zn(2+)</name>
        <dbReference type="ChEBI" id="CHEBI:29105"/>
        <label>2</label>
    </ligand>
</feature>
<feature type="binding site" evidence="1">
    <location>
        <position position="170"/>
    </location>
    <ligand>
        <name>Zn(2+)</name>
        <dbReference type="ChEBI" id="CHEBI:29105"/>
        <label>2</label>
    </ligand>
</feature>
<dbReference type="EC" id="3.1.2.6" evidence="1"/>
<dbReference type="EMBL" id="CP000240">
    <property type="protein sequence ID" value="ABD01152.1"/>
    <property type="molecule type" value="Genomic_DNA"/>
</dbReference>
<dbReference type="RefSeq" id="WP_011431823.1">
    <property type="nucleotide sequence ID" value="NC_007776.1"/>
</dbReference>
<dbReference type="SMR" id="Q2JPX4"/>
<dbReference type="STRING" id="321332.CYB_0151"/>
<dbReference type="KEGG" id="cyb:CYB_0151"/>
<dbReference type="eggNOG" id="COG0491">
    <property type="taxonomic scope" value="Bacteria"/>
</dbReference>
<dbReference type="HOGENOM" id="CLU_030571_4_1_3"/>
<dbReference type="OrthoDB" id="9802897at2"/>
<dbReference type="UniPathway" id="UPA00619">
    <property type="reaction ID" value="UER00676"/>
</dbReference>
<dbReference type="Proteomes" id="UP000001938">
    <property type="component" value="Chromosome"/>
</dbReference>
<dbReference type="GO" id="GO:0004416">
    <property type="term" value="F:hydroxyacylglutathione hydrolase activity"/>
    <property type="evidence" value="ECO:0007669"/>
    <property type="project" value="UniProtKB-UniRule"/>
</dbReference>
<dbReference type="GO" id="GO:0046872">
    <property type="term" value="F:metal ion binding"/>
    <property type="evidence" value="ECO:0007669"/>
    <property type="project" value="UniProtKB-KW"/>
</dbReference>
<dbReference type="GO" id="GO:0019243">
    <property type="term" value="P:methylglyoxal catabolic process to D-lactate via S-lactoyl-glutathione"/>
    <property type="evidence" value="ECO:0007669"/>
    <property type="project" value="InterPro"/>
</dbReference>
<dbReference type="CDD" id="cd07723">
    <property type="entry name" value="hydroxyacylglutathione_hydrolase_MBL-fold"/>
    <property type="match status" value="1"/>
</dbReference>
<dbReference type="Gene3D" id="3.60.15.10">
    <property type="entry name" value="Ribonuclease Z/Hydroxyacylglutathione hydrolase-like"/>
    <property type="match status" value="1"/>
</dbReference>
<dbReference type="HAMAP" id="MF_01374">
    <property type="entry name" value="Glyoxalase_2"/>
    <property type="match status" value="1"/>
</dbReference>
<dbReference type="InterPro" id="IPR035680">
    <property type="entry name" value="Clx_II_MBL"/>
</dbReference>
<dbReference type="InterPro" id="IPR050110">
    <property type="entry name" value="Glyoxalase_II_hydrolase"/>
</dbReference>
<dbReference type="InterPro" id="IPR032282">
    <property type="entry name" value="HAGH_C"/>
</dbReference>
<dbReference type="InterPro" id="IPR017782">
    <property type="entry name" value="Hydroxyacylglutathione_Hdrlase"/>
</dbReference>
<dbReference type="InterPro" id="IPR001279">
    <property type="entry name" value="Metallo-B-lactamas"/>
</dbReference>
<dbReference type="InterPro" id="IPR036866">
    <property type="entry name" value="RibonucZ/Hydroxyglut_hydro"/>
</dbReference>
<dbReference type="NCBIfam" id="TIGR03413">
    <property type="entry name" value="GSH_gloB"/>
    <property type="match status" value="1"/>
</dbReference>
<dbReference type="PANTHER" id="PTHR43705">
    <property type="entry name" value="HYDROXYACYLGLUTATHIONE HYDROLASE"/>
    <property type="match status" value="1"/>
</dbReference>
<dbReference type="PANTHER" id="PTHR43705:SF1">
    <property type="entry name" value="HYDROXYACYLGLUTATHIONE HYDROLASE GLOB"/>
    <property type="match status" value="1"/>
</dbReference>
<dbReference type="Pfam" id="PF16123">
    <property type="entry name" value="HAGH_C"/>
    <property type="match status" value="1"/>
</dbReference>
<dbReference type="Pfam" id="PF00753">
    <property type="entry name" value="Lactamase_B"/>
    <property type="match status" value="1"/>
</dbReference>
<dbReference type="PIRSF" id="PIRSF005457">
    <property type="entry name" value="Glx"/>
    <property type="match status" value="1"/>
</dbReference>
<dbReference type="SMART" id="SM00849">
    <property type="entry name" value="Lactamase_B"/>
    <property type="match status" value="1"/>
</dbReference>
<dbReference type="SUPFAM" id="SSF56281">
    <property type="entry name" value="Metallo-hydrolase/oxidoreductase"/>
    <property type="match status" value="1"/>
</dbReference>
<organism>
    <name type="scientific">Synechococcus sp. (strain JA-2-3B'a(2-13))</name>
    <name type="common">Cyanobacteria bacterium Yellowstone B-Prime</name>
    <dbReference type="NCBI Taxonomy" id="321332"/>
    <lineage>
        <taxon>Bacteria</taxon>
        <taxon>Bacillati</taxon>
        <taxon>Cyanobacteriota</taxon>
        <taxon>Cyanophyceae</taxon>
        <taxon>Synechococcales</taxon>
        <taxon>Synechococcaceae</taxon>
        <taxon>Synechococcus</taxon>
    </lineage>
</organism>
<gene>
    <name evidence="1" type="primary">gloB</name>
    <name type="ordered locus">CYB_0151</name>
</gene>
<name>GLO2_SYNJB</name>